<proteinExistence type="evidence at protein level"/>
<name>DZIP3_MOUSE</name>
<evidence type="ECO:0000250" key="1">
    <source>
        <dbReference type="UniProtKB" id="Q86Y13"/>
    </source>
</evidence>
<evidence type="ECO:0000255" key="2"/>
<evidence type="ECO:0000255" key="3">
    <source>
        <dbReference type="PROSITE-ProRule" id="PRU00175"/>
    </source>
</evidence>
<evidence type="ECO:0000256" key="4">
    <source>
        <dbReference type="SAM" id="MobiDB-lite"/>
    </source>
</evidence>
<evidence type="ECO:0000303" key="5">
    <source>
    </source>
</evidence>
<evidence type="ECO:0000303" key="6">
    <source>
    </source>
</evidence>
<evidence type="ECO:0000305" key="7"/>
<comment type="function">
    <text evidence="1">E3 Ubiquitin ligase proteins mediate ubiquitination and subsequent proteasomal degradation of target proteins. E3 ubiquitin ligases accept ubiquitin from an E2 ubiquitin-conjugating enzyme in the form of a thioester and then directly transfers the ubiquitin to targeted substrates. Able to specifically bind RNA.</text>
</comment>
<comment type="catalytic activity">
    <reaction evidence="1">
        <text>S-ubiquitinyl-[E2 ubiquitin-conjugating enzyme]-L-cysteine + [acceptor protein]-L-lysine = [E2 ubiquitin-conjugating enzyme]-L-cysteine + N(6)-ubiquitinyl-[acceptor protein]-L-lysine.</text>
        <dbReference type="EC" id="2.3.2.27"/>
    </reaction>
</comment>
<comment type="pathway">
    <text>Protein modification; protein ubiquitination.</text>
</comment>
<comment type="subunit">
    <text evidence="1">Probably interacts with DAZL.</text>
</comment>
<comment type="subcellular location">
    <subcellularLocation>
        <location evidence="1">Cytoplasm</location>
    </subcellularLocation>
</comment>
<comment type="alternative products">
    <event type="alternative splicing"/>
    <isoform>
        <id>Q7TPV2-1</id>
        <name>1</name>
        <sequence type="displayed"/>
    </isoform>
    <isoform>
        <id>Q7TPV2-2</id>
        <name>2</name>
        <sequence type="described" ref="VSP_010977"/>
    </isoform>
    <isoform>
        <id>Q7TPV2-3</id>
        <name>3</name>
        <sequence type="described" ref="VSP_010973 VSP_010974 VSP_010975 VSP_010976"/>
    </isoform>
</comment>
<comment type="sequence caution" evidence="7">
    <conflict type="erroneous initiation">
        <sequence resource="EMBL-CDS" id="BAC65626"/>
    </conflict>
</comment>
<sequence>MDSLAEEFFVSGNPDVEEQTKEETEIIAEKPVTQLDKQKMDISADPEPVNALLEIKKVLNPISALPKGVFPNIEKFIQEDFSFQTMQREVTTHSQTGEEIVPALTLHFLITQLEMALRNIQASNYTAQQINVGYYLTLLFLYGVALTERAKKEDCIEAENKFLVMKMVIQESEICENFMCLVYFGRGLLRCAQKRYNGALLEFYKSLQEIGDTDDNWFEVDPTDDEDLPTTFKDSLNNFIKTTESNIMKETICSYLDCERSCEADILKNTNYKGFFQLMCSKSCCIYFHKICWKKFKNLKYPGESDQSFSGQKCLKEGCPGDMVRMLQCDVPGIVKILFEVVRKDEYITIENLGASYKNLMSLELTDTDIRPKFNLKPNTKDEVPIFKLDYNYFYHLLHIIIISGTDMVRQIFDEAMPPTLLKKELLIHKNVLEPYYNHLWTNHPLGGSWHLLYPPNKELPQSKQFDLCLLLALIKHLNVFPAPRKGWDMEPPSSDLSKSADILRLCKYRDILLSEILMNGLTELQFNSIWKKVSDILLRLGMKQDDLDKVKENPIENISLDYHQLSIYLGIPVPEIIQRMLSCYQQGITLQSITGSQRLDVEEFQNDEEDLSPPVMEYNIDVKSNTEIQLAEINKDVASIPSESSTESVKDLQEVKSKTKKKKRTKSNKKDKDSEDEQVSYMVEKDDQLETEQVDVNTLSTYMKTDTSDAQEDSAAEDKFCSLDELHILDMVEQGSSGKESTDFKETEKERLAHQHQLYKLQYECEDYKRQLKTVTFRWQENQMLIKKKEKIIVSLNQQVAFGINKMSKLQRQIHAKDDEIKNLKDQLSLKRSQWEMEKHNLESTVKTYLNKLNAETSRALTAEVYFLQCRRDFGLLHLEQTEKECLNQLARVTHMAASNLESLQLKAAVDSWNAIVADVRNKIAFLRTQYNEQINKVKQGFALSTLPPVQLPPPPPSPEILIQQFLGRPLVKESFFRPILTVPQMPAVCPGVISAAVQPRPPLMPGITWAMPTPIGDTVSPSASLCSEPLMINWERITDRLKTAFPQQTRKELTDFLQQLKDSHGKSVSRLTFDEIVYKISQMIEPKKSESEEKSAQDGNNASPSHTASQPNAPQDPKSAQGSATWEGDKDMDNEEEEEEPCVICHENLSPENLSVLPCAHKFHSQCIRPWLMQQGTCPTCRLHVLQPEEFPGHPNGQLPKI</sequence>
<accession>Q7TPV2</accession>
<accession>Q148V3</accession>
<accession>Q80TU4</accession>
<accession>Q8BYK7</accession>
<feature type="chain" id="PRO_0000055899" description="E3 ubiquitin-protein ligase DZIP3">
    <location>
        <begin position="1"/>
        <end position="1204"/>
    </location>
</feature>
<feature type="zinc finger region" description="RING-type; atypical" evidence="3">
    <location>
        <begin position="1144"/>
        <end position="1184"/>
    </location>
</feature>
<feature type="region of interest" description="Disordered" evidence="4">
    <location>
        <begin position="1"/>
        <end position="22"/>
    </location>
</feature>
<feature type="region of interest" description="Disordered" evidence="4">
    <location>
        <begin position="640"/>
        <end position="681"/>
    </location>
</feature>
<feature type="region of interest" description="Disordered" evidence="4">
    <location>
        <begin position="1088"/>
        <end position="1141"/>
    </location>
</feature>
<feature type="coiled-coil region" evidence="2">
    <location>
        <begin position="746"/>
        <end position="861"/>
    </location>
</feature>
<feature type="coiled-coil region" evidence="2">
    <location>
        <begin position="906"/>
        <end position="941"/>
    </location>
</feature>
<feature type="compositionally biased region" description="Basic and acidic residues" evidence="4">
    <location>
        <begin position="649"/>
        <end position="658"/>
    </location>
</feature>
<feature type="compositionally biased region" description="Basic residues" evidence="4">
    <location>
        <begin position="659"/>
        <end position="668"/>
    </location>
</feature>
<feature type="compositionally biased region" description="Basic and acidic residues" evidence="4">
    <location>
        <begin position="1088"/>
        <end position="1098"/>
    </location>
</feature>
<feature type="compositionally biased region" description="Polar residues" evidence="4">
    <location>
        <begin position="1099"/>
        <end position="1126"/>
    </location>
</feature>
<feature type="compositionally biased region" description="Acidic residues" evidence="4">
    <location>
        <begin position="1132"/>
        <end position="1141"/>
    </location>
</feature>
<feature type="splice variant" id="VSP_010973" description="In isoform 3." evidence="5">
    <location>
        <begin position="1"/>
        <end position="889"/>
    </location>
</feature>
<feature type="splice variant" id="VSP_010977" description="In isoform 2." evidence="6">
    <location>
        <begin position="382"/>
        <end position="587"/>
    </location>
</feature>
<feature type="splice variant" id="VSP_010974" description="In isoform 3." evidence="5">
    <original>QLARVTHMAA</original>
    <variation>MFPLCLLFYI</variation>
    <location>
        <begin position="890"/>
        <end position="899"/>
    </location>
</feature>
<feature type="splice variant" id="VSP_010975" description="In isoform 3." evidence="5">
    <original>DNEEEEEEPCVICHENLSP</original>
    <variation>VRPNLLTVNTFRSERKRMV</variation>
    <location>
        <begin position="1135"/>
        <end position="1153"/>
    </location>
</feature>
<feature type="splice variant" id="VSP_010976" description="In isoform 3." evidence="5">
    <location>
        <begin position="1154"/>
        <end position="1204"/>
    </location>
</feature>
<feature type="sequence conflict" description="In Ref. 2; AAH52893." evidence="7" ref="2">
    <original>D</original>
    <variation>G</variation>
    <location>
        <position position="306"/>
    </location>
</feature>
<feature type="sequence conflict" description="In Ref. 2; AAH52893." evidence="7" ref="2">
    <original>V</original>
    <variation>I</variation>
    <location>
        <position position="650"/>
    </location>
</feature>
<reference key="1">
    <citation type="journal article" date="2003" name="DNA Res.">
        <title>Prediction of the coding sequences of mouse homologues of KIAA gene: II. The complete nucleotide sequences of 400 mouse KIAA-homologous cDNAs identified by screening of terminal sequences of cDNA clones randomly sampled from size-fractionated libraries.</title>
        <authorList>
            <person name="Okazaki N."/>
            <person name="Kikuno R."/>
            <person name="Ohara R."/>
            <person name="Inamoto S."/>
            <person name="Aizawa H."/>
            <person name="Yuasa S."/>
            <person name="Nakajima D."/>
            <person name="Nagase T."/>
            <person name="Ohara O."/>
            <person name="Koga H."/>
        </authorList>
    </citation>
    <scope>NUCLEOTIDE SEQUENCE [LARGE SCALE MRNA] (ISOFORM 3)</scope>
    <source>
        <tissue>Brain</tissue>
    </source>
</reference>
<reference key="2">
    <citation type="journal article" date="2004" name="Genome Res.">
        <title>The status, quality, and expansion of the NIH full-length cDNA project: the Mammalian Gene Collection (MGC).</title>
        <authorList>
            <consortium name="The MGC Project Team"/>
        </authorList>
    </citation>
    <scope>NUCLEOTIDE SEQUENCE [LARGE SCALE MRNA] (ISOFORM 2)</scope>
    <source>
        <strain>C3H/He</strain>
        <tissue>Osteoblast</tissue>
    </source>
</reference>
<reference key="3">
    <citation type="journal article" date="2005" name="Science">
        <title>The transcriptional landscape of the mammalian genome.</title>
        <authorList>
            <person name="Carninci P."/>
            <person name="Kasukawa T."/>
            <person name="Katayama S."/>
            <person name="Gough J."/>
            <person name="Frith M.C."/>
            <person name="Maeda N."/>
            <person name="Oyama R."/>
            <person name="Ravasi T."/>
            <person name="Lenhard B."/>
            <person name="Wells C."/>
            <person name="Kodzius R."/>
            <person name="Shimokawa K."/>
            <person name="Bajic V.B."/>
            <person name="Brenner S.E."/>
            <person name="Batalov S."/>
            <person name="Forrest A.R."/>
            <person name="Zavolan M."/>
            <person name="Davis M.J."/>
            <person name="Wilming L.G."/>
            <person name="Aidinis V."/>
            <person name="Allen J.E."/>
            <person name="Ambesi-Impiombato A."/>
            <person name="Apweiler R."/>
            <person name="Aturaliya R.N."/>
            <person name="Bailey T.L."/>
            <person name="Bansal M."/>
            <person name="Baxter L."/>
            <person name="Beisel K.W."/>
            <person name="Bersano T."/>
            <person name="Bono H."/>
            <person name="Chalk A.M."/>
            <person name="Chiu K.P."/>
            <person name="Choudhary V."/>
            <person name="Christoffels A."/>
            <person name="Clutterbuck D.R."/>
            <person name="Crowe M.L."/>
            <person name="Dalla E."/>
            <person name="Dalrymple B.P."/>
            <person name="de Bono B."/>
            <person name="Della Gatta G."/>
            <person name="di Bernardo D."/>
            <person name="Down T."/>
            <person name="Engstrom P."/>
            <person name="Fagiolini M."/>
            <person name="Faulkner G."/>
            <person name="Fletcher C.F."/>
            <person name="Fukushima T."/>
            <person name="Furuno M."/>
            <person name="Futaki S."/>
            <person name="Gariboldi M."/>
            <person name="Georgii-Hemming P."/>
            <person name="Gingeras T.R."/>
            <person name="Gojobori T."/>
            <person name="Green R.E."/>
            <person name="Gustincich S."/>
            <person name="Harbers M."/>
            <person name="Hayashi Y."/>
            <person name="Hensch T.K."/>
            <person name="Hirokawa N."/>
            <person name="Hill D."/>
            <person name="Huminiecki L."/>
            <person name="Iacono M."/>
            <person name="Ikeo K."/>
            <person name="Iwama A."/>
            <person name="Ishikawa T."/>
            <person name="Jakt M."/>
            <person name="Kanapin A."/>
            <person name="Katoh M."/>
            <person name="Kawasawa Y."/>
            <person name="Kelso J."/>
            <person name="Kitamura H."/>
            <person name="Kitano H."/>
            <person name="Kollias G."/>
            <person name="Krishnan S.P."/>
            <person name="Kruger A."/>
            <person name="Kummerfeld S.K."/>
            <person name="Kurochkin I.V."/>
            <person name="Lareau L.F."/>
            <person name="Lazarevic D."/>
            <person name="Lipovich L."/>
            <person name="Liu J."/>
            <person name="Liuni S."/>
            <person name="McWilliam S."/>
            <person name="Madan Babu M."/>
            <person name="Madera M."/>
            <person name="Marchionni L."/>
            <person name="Matsuda H."/>
            <person name="Matsuzawa S."/>
            <person name="Miki H."/>
            <person name="Mignone F."/>
            <person name="Miyake S."/>
            <person name="Morris K."/>
            <person name="Mottagui-Tabar S."/>
            <person name="Mulder N."/>
            <person name="Nakano N."/>
            <person name="Nakauchi H."/>
            <person name="Ng P."/>
            <person name="Nilsson R."/>
            <person name="Nishiguchi S."/>
            <person name="Nishikawa S."/>
            <person name="Nori F."/>
            <person name="Ohara O."/>
            <person name="Okazaki Y."/>
            <person name="Orlando V."/>
            <person name="Pang K.C."/>
            <person name="Pavan W.J."/>
            <person name="Pavesi G."/>
            <person name="Pesole G."/>
            <person name="Petrovsky N."/>
            <person name="Piazza S."/>
            <person name="Reed J."/>
            <person name="Reid J.F."/>
            <person name="Ring B.Z."/>
            <person name="Ringwald M."/>
            <person name="Rost B."/>
            <person name="Ruan Y."/>
            <person name="Salzberg S.L."/>
            <person name="Sandelin A."/>
            <person name="Schneider C."/>
            <person name="Schoenbach C."/>
            <person name="Sekiguchi K."/>
            <person name="Semple C.A."/>
            <person name="Seno S."/>
            <person name="Sessa L."/>
            <person name="Sheng Y."/>
            <person name="Shibata Y."/>
            <person name="Shimada H."/>
            <person name="Shimada K."/>
            <person name="Silva D."/>
            <person name="Sinclair B."/>
            <person name="Sperling S."/>
            <person name="Stupka E."/>
            <person name="Sugiura K."/>
            <person name="Sultana R."/>
            <person name="Takenaka Y."/>
            <person name="Taki K."/>
            <person name="Tammoja K."/>
            <person name="Tan S.L."/>
            <person name="Tang S."/>
            <person name="Taylor M.S."/>
            <person name="Tegner J."/>
            <person name="Teichmann S.A."/>
            <person name="Ueda H.R."/>
            <person name="van Nimwegen E."/>
            <person name="Verardo R."/>
            <person name="Wei C.L."/>
            <person name="Yagi K."/>
            <person name="Yamanishi H."/>
            <person name="Zabarovsky E."/>
            <person name="Zhu S."/>
            <person name="Zimmer A."/>
            <person name="Hide W."/>
            <person name="Bult C."/>
            <person name="Grimmond S.M."/>
            <person name="Teasdale R.D."/>
            <person name="Liu E.T."/>
            <person name="Brusic V."/>
            <person name="Quackenbush J."/>
            <person name="Wahlestedt C."/>
            <person name="Mattick J.S."/>
            <person name="Hume D.A."/>
            <person name="Kai C."/>
            <person name="Sasaki D."/>
            <person name="Tomaru Y."/>
            <person name="Fukuda S."/>
            <person name="Kanamori-Katayama M."/>
            <person name="Suzuki M."/>
            <person name="Aoki J."/>
            <person name="Arakawa T."/>
            <person name="Iida J."/>
            <person name="Imamura K."/>
            <person name="Itoh M."/>
            <person name="Kato T."/>
            <person name="Kawaji H."/>
            <person name="Kawagashira N."/>
            <person name="Kawashima T."/>
            <person name="Kojima M."/>
            <person name="Kondo S."/>
            <person name="Konno H."/>
            <person name="Nakano K."/>
            <person name="Ninomiya N."/>
            <person name="Nishio T."/>
            <person name="Okada M."/>
            <person name="Plessy C."/>
            <person name="Shibata K."/>
            <person name="Shiraki T."/>
            <person name="Suzuki S."/>
            <person name="Tagami M."/>
            <person name="Waki K."/>
            <person name="Watahiki A."/>
            <person name="Okamura-Oho Y."/>
            <person name="Suzuki H."/>
            <person name="Kawai J."/>
            <person name="Hayashizaki Y."/>
        </authorList>
    </citation>
    <scope>NUCLEOTIDE SEQUENCE [LARGE SCALE MRNA] OF 1-787 (ISOFORM 1)</scope>
    <source>
        <strain>C57BL/6J</strain>
        <tissue>Hypothalamus</tissue>
    </source>
</reference>
<reference key="4">
    <citation type="submission" date="2004-04" db="EMBL/GenBank/DDBJ databases">
        <authorList>
            <consortium name="The MGC Project Team"/>
        </authorList>
    </citation>
    <scope>NUCLEOTIDE SEQUENCE [LARGE SCALE MRNA] OF 767-1133 (ISOFORM 1)</scope>
    <source>
        <tissue>Head</tissue>
        <tissue>Retina</tissue>
    </source>
</reference>
<reference key="5">
    <citation type="submission" date="2003-12" db="EMBL/GenBank/DDBJ databases">
        <authorList>
            <person name="Tanaka T.S."/>
            <person name="Jaradat S.A."/>
            <person name="Lim M.K."/>
            <person name="Kargul G.J."/>
            <person name="Wang X."/>
            <person name="Grahovac M.J."/>
            <person name="Pantano S."/>
            <person name="Sano Y."/>
            <person name="Piao Y."/>
            <person name="Nagaraja R."/>
            <person name="Doi H."/>
            <person name="Wood W.H. III"/>
            <person name="Becker K.G."/>
            <person name="Ko M.S.H."/>
        </authorList>
    </citation>
    <scope>NUCLEOTIDE SEQUENCE [MRNA] OF 1062-1204 (ISOFORM 1)</scope>
</reference>
<reference key="6">
    <citation type="journal article" date="2010" name="Cell">
        <title>A tissue-specific atlas of mouse protein phosphorylation and expression.</title>
        <authorList>
            <person name="Huttlin E.L."/>
            <person name="Jedrychowski M.P."/>
            <person name="Elias J.E."/>
            <person name="Goswami T."/>
            <person name="Rad R."/>
            <person name="Beausoleil S.A."/>
            <person name="Villen J."/>
            <person name="Haas W."/>
            <person name="Sowa M.E."/>
            <person name="Gygi S.P."/>
        </authorList>
    </citation>
    <scope>IDENTIFICATION BY MASS SPECTROMETRY [LARGE SCALE ANALYSIS]</scope>
    <source>
        <tissue>Brain</tissue>
    </source>
</reference>
<gene>
    <name type="primary">Dzip3</name>
    <name type="synonym">Kiaa0675</name>
</gene>
<keyword id="KW-0025">Alternative splicing</keyword>
<keyword id="KW-0175">Coiled coil</keyword>
<keyword id="KW-0963">Cytoplasm</keyword>
<keyword id="KW-0479">Metal-binding</keyword>
<keyword id="KW-1185">Reference proteome</keyword>
<keyword id="KW-0694">RNA-binding</keyword>
<keyword id="KW-0808">Transferase</keyword>
<keyword id="KW-0833">Ubl conjugation pathway</keyword>
<keyword id="KW-0862">Zinc</keyword>
<keyword id="KW-0863">Zinc-finger</keyword>
<organism>
    <name type="scientific">Mus musculus</name>
    <name type="common">Mouse</name>
    <dbReference type="NCBI Taxonomy" id="10090"/>
    <lineage>
        <taxon>Eukaryota</taxon>
        <taxon>Metazoa</taxon>
        <taxon>Chordata</taxon>
        <taxon>Craniata</taxon>
        <taxon>Vertebrata</taxon>
        <taxon>Euteleostomi</taxon>
        <taxon>Mammalia</taxon>
        <taxon>Eutheria</taxon>
        <taxon>Euarchontoglires</taxon>
        <taxon>Glires</taxon>
        <taxon>Rodentia</taxon>
        <taxon>Myomorpha</taxon>
        <taxon>Muroidea</taxon>
        <taxon>Muridae</taxon>
        <taxon>Murinae</taxon>
        <taxon>Mus</taxon>
        <taxon>Mus</taxon>
    </lineage>
</organism>
<protein>
    <recommendedName>
        <fullName>E3 ubiquitin-protein ligase DZIP3</fullName>
        <ecNumber evidence="1">2.3.2.27</ecNumber>
    </recommendedName>
    <alternativeName>
        <fullName>DAZ-interacting protein 3 homolog</fullName>
    </alternativeName>
    <alternativeName>
        <fullName evidence="7">RING-type E3 ubiquitin transferase DZIP3</fullName>
    </alternativeName>
</protein>
<dbReference type="EC" id="2.3.2.27" evidence="1"/>
<dbReference type="EMBL" id="AK122344">
    <property type="protein sequence ID" value="BAC65626.1"/>
    <property type="status" value="ALT_INIT"/>
    <property type="molecule type" value="mRNA"/>
</dbReference>
<dbReference type="EMBL" id="BC052893">
    <property type="protein sequence ID" value="AAH52893.1"/>
    <property type="molecule type" value="mRNA"/>
</dbReference>
<dbReference type="EMBL" id="BC117953">
    <property type="protein sequence ID" value="AAI17954.1"/>
    <property type="molecule type" value="mRNA"/>
</dbReference>
<dbReference type="EMBL" id="BC117954">
    <property type="protein sequence ID" value="AAI17955.1"/>
    <property type="molecule type" value="mRNA"/>
</dbReference>
<dbReference type="EMBL" id="AK039172">
    <property type="protein sequence ID" value="BAC30265.1"/>
    <property type="molecule type" value="mRNA"/>
</dbReference>
<dbReference type="EMBL" id="BI736207">
    <property type="status" value="NOT_ANNOTATED_CDS"/>
    <property type="molecule type" value="mRNA"/>
</dbReference>
<dbReference type="EMBL" id="CN535823">
    <property type="status" value="NOT_ANNOTATED_CDS"/>
    <property type="molecule type" value="mRNA"/>
</dbReference>
<dbReference type="EMBL" id="BG070132">
    <property type="status" value="NOT_ANNOTATED_CDS"/>
    <property type="molecule type" value="mRNA"/>
</dbReference>
<dbReference type="CCDS" id="CCDS37353.1">
    <molecule id="Q7TPV2-2"/>
</dbReference>
<dbReference type="CCDS" id="CCDS49866.1">
    <molecule id="Q7TPV2-1"/>
</dbReference>
<dbReference type="RefSeq" id="NP_081617.1">
    <molecule id="Q7TPV2-2"/>
    <property type="nucleotide sequence ID" value="NM_027341.2"/>
</dbReference>
<dbReference type="SMR" id="Q7TPV2"/>
<dbReference type="BioGRID" id="230255">
    <property type="interactions" value="15"/>
</dbReference>
<dbReference type="FunCoup" id="Q7TPV2">
    <property type="interactions" value="870"/>
</dbReference>
<dbReference type="IntAct" id="Q7TPV2">
    <property type="interactions" value="2"/>
</dbReference>
<dbReference type="MINT" id="Q7TPV2"/>
<dbReference type="STRING" id="10090.ENSMUSP00000113344"/>
<dbReference type="GlyGen" id="Q7TPV2">
    <property type="glycosylation" value="1 site"/>
</dbReference>
<dbReference type="iPTMnet" id="Q7TPV2"/>
<dbReference type="PhosphoSitePlus" id="Q7TPV2"/>
<dbReference type="PaxDb" id="10090-ENSMUSP00000113344"/>
<dbReference type="ProteomicsDB" id="277659">
    <molecule id="Q7TPV2-1"/>
</dbReference>
<dbReference type="ProteomicsDB" id="277660">
    <molecule id="Q7TPV2-2"/>
</dbReference>
<dbReference type="ProteomicsDB" id="277661">
    <molecule id="Q7TPV2-3"/>
</dbReference>
<dbReference type="Pumba" id="Q7TPV2"/>
<dbReference type="Antibodypedia" id="32388">
    <property type="antibodies" value="162 antibodies from 21 providers"/>
</dbReference>
<dbReference type="Ensembl" id="ENSMUST00000114516.8">
    <molecule id="Q7TPV2-2"/>
    <property type="protein sequence ID" value="ENSMUSP00000110161.2"/>
    <property type="gene ID" value="ENSMUSG00000064061.14"/>
</dbReference>
<dbReference type="GeneID" id="224170"/>
<dbReference type="KEGG" id="mmu:224170"/>
<dbReference type="UCSC" id="uc007zjy.1">
    <molecule id="Q7TPV2-3"/>
    <property type="organism name" value="mouse"/>
</dbReference>
<dbReference type="UCSC" id="uc007zjz.2">
    <molecule id="Q7TPV2-2"/>
    <property type="organism name" value="mouse"/>
</dbReference>
<dbReference type="AGR" id="MGI:1917433"/>
<dbReference type="CTD" id="9666"/>
<dbReference type="MGI" id="MGI:1917433">
    <property type="gene designation" value="Dzip3"/>
</dbReference>
<dbReference type="VEuPathDB" id="HostDB:ENSMUSG00000064061"/>
<dbReference type="eggNOG" id="KOG0800">
    <property type="taxonomic scope" value="Eukaryota"/>
</dbReference>
<dbReference type="GeneTree" id="ENSGT00940000161692"/>
<dbReference type="InParanoid" id="Q7TPV2"/>
<dbReference type="OrthoDB" id="8062037at2759"/>
<dbReference type="PhylomeDB" id="Q7TPV2"/>
<dbReference type="Reactome" id="R-MMU-983168">
    <property type="pathway name" value="Antigen processing: Ubiquitination &amp; Proteasome degradation"/>
</dbReference>
<dbReference type="UniPathway" id="UPA00143"/>
<dbReference type="BioGRID-ORCS" id="224170">
    <property type="hits" value="4 hits in 78 CRISPR screens"/>
</dbReference>
<dbReference type="ChiTaRS" id="Dzip3">
    <property type="organism name" value="mouse"/>
</dbReference>
<dbReference type="PRO" id="PR:Q7TPV2"/>
<dbReference type="Proteomes" id="UP000000589">
    <property type="component" value="Chromosome 16"/>
</dbReference>
<dbReference type="RNAct" id="Q7TPV2">
    <property type="molecule type" value="protein"/>
</dbReference>
<dbReference type="Bgee" id="ENSMUSG00000064061">
    <property type="expression patterns" value="Expressed in superior cervical ganglion and 232 other cell types or tissues"/>
</dbReference>
<dbReference type="ExpressionAtlas" id="Q7TPV2">
    <property type="expression patterns" value="baseline and differential"/>
</dbReference>
<dbReference type="GO" id="GO:0005737">
    <property type="term" value="C:cytoplasm"/>
    <property type="evidence" value="ECO:0007669"/>
    <property type="project" value="UniProtKB-SubCell"/>
</dbReference>
<dbReference type="GO" id="GO:0019902">
    <property type="term" value="F:phosphatase binding"/>
    <property type="evidence" value="ECO:0000250"/>
    <property type="project" value="UniProtKB"/>
</dbReference>
<dbReference type="GO" id="GO:0003723">
    <property type="term" value="F:RNA binding"/>
    <property type="evidence" value="ECO:0007669"/>
    <property type="project" value="UniProtKB-KW"/>
</dbReference>
<dbReference type="GO" id="GO:0061630">
    <property type="term" value="F:ubiquitin protein ligase activity"/>
    <property type="evidence" value="ECO:0007669"/>
    <property type="project" value="InterPro"/>
</dbReference>
<dbReference type="GO" id="GO:0008270">
    <property type="term" value="F:zinc ion binding"/>
    <property type="evidence" value="ECO:0007669"/>
    <property type="project" value="UniProtKB-KW"/>
</dbReference>
<dbReference type="GO" id="GO:0000209">
    <property type="term" value="P:protein polyubiquitination"/>
    <property type="evidence" value="ECO:0007669"/>
    <property type="project" value="InterPro"/>
</dbReference>
<dbReference type="CDD" id="cd16460">
    <property type="entry name" value="RING-H2_DZIP3"/>
    <property type="match status" value="1"/>
</dbReference>
<dbReference type="FunFam" id="3.30.40.10:FF:000308">
    <property type="entry name" value="E3 ubiquitin-protein ligase DZIP3 isoform X1"/>
    <property type="match status" value="1"/>
</dbReference>
<dbReference type="Gene3D" id="3.30.40.10">
    <property type="entry name" value="Zinc/RING finger domain, C3HC4 (zinc finger)"/>
    <property type="match status" value="1"/>
</dbReference>
<dbReference type="InterPro" id="IPR033103">
    <property type="entry name" value="DZIP3_RING-H2_finger"/>
</dbReference>
<dbReference type="InterPro" id="IPR041249">
    <property type="entry name" value="HEPN_DZIP3"/>
</dbReference>
<dbReference type="InterPro" id="IPR056872">
    <property type="entry name" value="TTC3/DZIP3-like_helical"/>
</dbReference>
<dbReference type="InterPro" id="IPR056870">
    <property type="entry name" value="TTC3/DZIP3/RBM44-like_helical"/>
</dbReference>
<dbReference type="InterPro" id="IPR043866">
    <property type="entry name" value="TTC3/DZIP3_dom"/>
</dbReference>
<dbReference type="InterPro" id="IPR001841">
    <property type="entry name" value="Znf_RING"/>
</dbReference>
<dbReference type="InterPro" id="IPR013083">
    <property type="entry name" value="Znf_RING/FYVE/PHD"/>
</dbReference>
<dbReference type="PANTHER" id="PTHR15727:SF4">
    <property type="entry name" value="E3 UBIQUITIN-PROTEIN LIGASE DZIP3"/>
    <property type="match status" value="1"/>
</dbReference>
<dbReference type="PANTHER" id="PTHR15727">
    <property type="entry name" value="RING FINGER PROTEIN 214"/>
    <property type="match status" value="1"/>
</dbReference>
<dbReference type="Pfam" id="PF18738">
    <property type="entry name" value="HEPN_DZIP3"/>
    <property type="match status" value="1"/>
</dbReference>
<dbReference type="Pfam" id="PF24525">
    <property type="entry name" value="TTC3"/>
    <property type="match status" value="1"/>
</dbReference>
<dbReference type="Pfam" id="PF24905">
    <property type="entry name" value="TTC3_9th"/>
    <property type="match status" value="1"/>
</dbReference>
<dbReference type="Pfam" id="PF19179">
    <property type="entry name" value="TTC3_DZIP3_dom"/>
    <property type="match status" value="1"/>
</dbReference>
<dbReference type="Pfam" id="PF13639">
    <property type="entry name" value="zf-RING_2"/>
    <property type="match status" value="1"/>
</dbReference>
<dbReference type="SMART" id="SM00184">
    <property type="entry name" value="RING"/>
    <property type="match status" value="1"/>
</dbReference>
<dbReference type="SUPFAM" id="SSF57850">
    <property type="entry name" value="RING/U-box"/>
    <property type="match status" value="1"/>
</dbReference>
<dbReference type="PROSITE" id="PS50089">
    <property type="entry name" value="ZF_RING_2"/>
    <property type="match status" value="1"/>
</dbReference>